<organism>
    <name type="scientific">Salmonella gallinarum (strain 287/91 / NCTC 13346)</name>
    <dbReference type="NCBI Taxonomy" id="550538"/>
    <lineage>
        <taxon>Bacteria</taxon>
        <taxon>Pseudomonadati</taxon>
        <taxon>Pseudomonadota</taxon>
        <taxon>Gammaproteobacteria</taxon>
        <taxon>Enterobacterales</taxon>
        <taxon>Enterobacteriaceae</taxon>
        <taxon>Salmonella</taxon>
    </lineage>
</organism>
<sequence length="81" mass="9193">MSDLFSSPDHTLDALGLRCPEPVMMVRKTVRNMQTGETLLIIADDPATTRDIPGFCTFMEHDLLAQETEGLPYRYLLRKAH</sequence>
<accession>B5RGU8</accession>
<protein>
    <recommendedName>
        <fullName evidence="1">Sulfur carrier protein TusA</fullName>
    </recommendedName>
    <alternativeName>
        <fullName evidence="1">Sulfur mediator TusA</fullName>
    </alternativeName>
    <alternativeName>
        <fullName evidence="1">Sulfur transfer protein TusA</fullName>
    </alternativeName>
    <alternativeName>
        <fullName evidence="1">tRNA 2-thiouridine synthesizing protein A</fullName>
    </alternativeName>
</protein>
<comment type="function">
    <text evidence="1">Sulfur carrier protein involved in sulfur trafficking in the cell. Part of a sulfur-relay system required for 2-thiolation during synthesis of 2-thiouridine of the modified wobble base 5-methylaminomethyl-2-thiouridine (mnm(5)s(2)U) in tRNA. Interacts with IscS and stimulates its cysteine desulfurase activity. Accepts an activated sulfur from IscS, which is then transferred to TusD, and thus determines the direction of sulfur flow from IscS to 2-thiouridine formation. Also appears to be involved in sulfur transfer for the biosynthesis of molybdopterin.</text>
</comment>
<comment type="pathway">
    <text evidence="1">tRNA modification.</text>
</comment>
<comment type="subunit">
    <text evidence="1">Interacts with IscS.</text>
</comment>
<comment type="subcellular location">
    <subcellularLocation>
        <location evidence="1">Cytoplasm</location>
    </subcellularLocation>
</comment>
<comment type="similarity">
    <text evidence="1">Belongs to the sulfur carrier protein TusA family.</text>
</comment>
<gene>
    <name evidence="1" type="primary">tusA</name>
    <name type="ordered locus">SG3859</name>
</gene>
<keyword id="KW-0963">Cytoplasm</keyword>
<keyword id="KW-0819">tRNA processing</keyword>
<evidence type="ECO:0000255" key="1">
    <source>
        <dbReference type="HAMAP-Rule" id="MF_00413"/>
    </source>
</evidence>
<reference key="1">
    <citation type="journal article" date="2008" name="Genome Res.">
        <title>Comparative genome analysis of Salmonella enteritidis PT4 and Salmonella gallinarum 287/91 provides insights into evolutionary and host adaptation pathways.</title>
        <authorList>
            <person name="Thomson N.R."/>
            <person name="Clayton D.J."/>
            <person name="Windhorst D."/>
            <person name="Vernikos G."/>
            <person name="Davidson S."/>
            <person name="Churcher C."/>
            <person name="Quail M.A."/>
            <person name="Stevens M."/>
            <person name="Jones M.A."/>
            <person name="Watson M."/>
            <person name="Barron A."/>
            <person name="Layton A."/>
            <person name="Pickard D."/>
            <person name="Kingsley R.A."/>
            <person name="Bignell A."/>
            <person name="Clark L."/>
            <person name="Harris B."/>
            <person name="Ormond D."/>
            <person name="Abdellah Z."/>
            <person name="Brooks K."/>
            <person name="Cherevach I."/>
            <person name="Chillingworth T."/>
            <person name="Woodward J."/>
            <person name="Norberczak H."/>
            <person name="Lord A."/>
            <person name="Arrowsmith C."/>
            <person name="Jagels K."/>
            <person name="Moule S."/>
            <person name="Mungall K."/>
            <person name="Saunders M."/>
            <person name="Whitehead S."/>
            <person name="Chabalgoity J.A."/>
            <person name="Maskell D."/>
            <person name="Humphreys T."/>
            <person name="Roberts M."/>
            <person name="Barrow P.A."/>
            <person name="Dougan G."/>
            <person name="Parkhill J."/>
        </authorList>
    </citation>
    <scope>NUCLEOTIDE SEQUENCE [LARGE SCALE GENOMIC DNA]</scope>
    <source>
        <strain>287/91 / NCTC 13346</strain>
    </source>
</reference>
<feature type="chain" id="PRO_1000199929" description="Sulfur carrier protein TusA">
    <location>
        <begin position="1"/>
        <end position="81"/>
    </location>
</feature>
<feature type="active site" description="Cysteine persulfide intermediate" evidence="1">
    <location>
        <position position="19"/>
    </location>
</feature>
<name>TUSA_SALG2</name>
<dbReference type="EMBL" id="AM933173">
    <property type="protein sequence ID" value="CAR39635.1"/>
    <property type="molecule type" value="Genomic_DNA"/>
</dbReference>
<dbReference type="RefSeq" id="WP_001541054.1">
    <property type="nucleotide sequence ID" value="NC_011274.1"/>
</dbReference>
<dbReference type="SMR" id="B5RGU8"/>
<dbReference type="GeneID" id="66757902"/>
<dbReference type="KEGG" id="seg:SG3859"/>
<dbReference type="HOGENOM" id="CLU_165255_5_0_6"/>
<dbReference type="Proteomes" id="UP000008321">
    <property type="component" value="Chromosome"/>
</dbReference>
<dbReference type="GO" id="GO:0005737">
    <property type="term" value="C:cytoplasm"/>
    <property type="evidence" value="ECO:0007669"/>
    <property type="project" value="UniProtKB-SubCell"/>
</dbReference>
<dbReference type="GO" id="GO:0097163">
    <property type="term" value="F:sulfur carrier activity"/>
    <property type="evidence" value="ECO:0007669"/>
    <property type="project" value="UniProtKB-UniRule"/>
</dbReference>
<dbReference type="GO" id="GO:0002143">
    <property type="term" value="P:tRNA wobble position uridine thiolation"/>
    <property type="evidence" value="ECO:0007669"/>
    <property type="project" value="InterPro"/>
</dbReference>
<dbReference type="CDD" id="cd03423">
    <property type="entry name" value="SirA"/>
    <property type="match status" value="1"/>
</dbReference>
<dbReference type="Gene3D" id="3.30.110.40">
    <property type="entry name" value="TusA-like domain"/>
    <property type="match status" value="1"/>
</dbReference>
<dbReference type="HAMAP" id="MF_00413">
    <property type="entry name" value="Thiourid_synth_A"/>
    <property type="match status" value="1"/>
</dbReference>
<dbReference type="InterPro" id="IPR022931">
    <property type="entry name" value="Sulphur_carrier_TusA"/>
</dbReference>
<dbReference type="InterPro" id="IPR001455">
    <property type="entry name" value="TusA-like"/>
</dbReference>
<dbReference type="InterPro" id="IPR036868">
    <property type="entry name" value="TusA-like_sf"/>
</dbReference>
<dbReference type="NCBIfam" id="NF001423">
    <property type="entry name" value="PRK00299.1"/>
    <property type="match status" value="1"/>
</dbReference>
<dbReference type="PANTHER" id="PTHR33279:SF2">
    <property type="entry name" value="SULFUR CARRIER PROTEIN TUSA"/>
    <property type="match status" value="1"/>
</dbReference>
<dbReference type="PANTHER" id="PTHR33279">
    <property type="entry name" value="SULFUR CARRIER PROTEIN YEDF-RELATED"/>
    <property type="match status" value="1"/>
</dbReference>
<dbReference type="Pfam" id="PF01206">
    <property type="entry name" value="TusA"/>
    <property type="match status" value="1"/>
</dbReference>
<dbReference type="SUPFAM" id="SSF64307">
    <property type="entry name" value="SirA-like"/>
    <property type="match status" value="1"/>
</dbReference>
<dbReference type="PROSITE" id="PS01148">
    <property type="entry name" value="UPF0033"/>
    <property type="match status" value="1"/>
</dbReference>
<proteinExistence type="inferred from homology"/>